<organism>
    <name type="scientific">Rhizobium rhizogenes (strain K84 / ATCC BAA-868)</name>
    <name type="common">Agrobacterium radiobacter</name>
    <dbReference type="NCBI Taxonomy" id="311403"/>
    <lineage>
        <taxon>Bacteria</taxon>
        <taxon>Pseudomonadati</taxon>
        <taxon>Pseudomonadota</taxon>
        <taxon>Alphaproteobacteria</taxon>
        <taxon>Hyphomicrobiales</taxon>
        <taxon>Rhizobiaceae</taxon>
        <taxon>Rhizobium/Agrobacterium group</taxon>
        <taxon>Rhizobium</taxon>
    </lineage>
</organism>
<sequence length="397" mass="41940">MNIHEYQAKALLKSFGAPVADGVAIFSADEAEAAAKQLPGPLYVVKSQIHAGGRGKGKFKELSPDAKGGVRLAKSIEDVVANSKDMLGNTLVTKQTGPAGKQVNRLYIEDGADIDRELYLSILVDRSVGQVAFVVSTEGGMDIETVAHDTPEKIITVAIDPAAGVTAADSTAISDALKLEGAAREDGAKLFPILYKAFVEKDMALLEVNPLIVMTNGRLRVLDAKVSFDGNALFRHEDIRALRDKSEEDEKEIQAHEYDLAYVALDGNIGCMVNGAGLAMATMDIIKLYGAEPANFLDVGGGATKEKVTAAFKIITADPAVQGILVNIFGGIMKCDVIAEGVLAAVKEVGLKVPLVVRLEGTNVELGKKIINESGLNVISADDLDDAAQKIVKAVKG</sequence>
<name>SUCC_RHIR8</name>
<comment type="function">
    <text evidence="1">Succinyl-CoA synthetase functions in the citric acid cycle (TCA), coupling the hydrolysis of succinyl-CoA to the synthesis of either ATP or GTP and thus represents the only step of substrate-level phosphorylation in the TCA. The beta subunit provides nucleotide specificity of the enzyme and binds the substrate succinate, while the binding sites for coenzyme A and phosphate are found in the alpha subunit.</text>
</comment>
<comment type="catalytic activity">
    <reaction evidence="1">
        <text>succinate + ATP + CoA = succinyl-CoA + ADP + phosphate</text>
        <dbReference type="Rhea" id="RHEA:17661"/>
        <dbReference type="ChEBI" id="CHEBI:30031"/>
        <dbReference type="ChEBI" id="CHEBI:30616"/>
        <dbReference type="ChEBI" id="CHEBI:43474"/>
        <dbReference type="ChEBI" id="CHEBI:57287"/>
        <dbReference type="ChEBI" id="CHEBI:57292"/>
        <dbReference type="ChEBI" id="CHEBI:456216"/>
        <dbReference type="EC" id="6.2.1.5"/>
    </reaction>
    <physiologicalReaction direction="right-to-left" evidence="1">
        <dbReference type="Rhea" id="RHEA:17663"/>
    </physiologicalReaction>
</comment>
<comment type="catalytic activity">
    <reaction evidence="1">
        <text>GTP + succinate + CoA = succinyl-CoA + GDP + phosphate</text>
        <dbReference type="Rhea" id="RHEA:22120"/>
        <dbReference type="ChEBI" id="CHEBI:30031"/>
        <dbReference type="ChEBI" id="CHEBI:37565"/>
        <dbReference type="ChEBI" id="CHEBI:43474"/>
        <dbReference type="ChEBI" id="CHEBI:57287"/>
        <dbReference type="ChEBI" id="CHEBI:57292"/>
        <dbReference type="ChEBI" id="CHEBI:58189"/>
    </reaction>
    <physiologicalReaction direction="right-to-left" evidence="1">
        <dbReference type="Rhea" id="RHEA:22122"/>
    </physiologicalReaction>
</comment>
<comment type="cofactor">
    <cofactor evidence="1">
        <name>Mg(2+)</name>
        <dbReference type="ChEBI" id="CHEBI:18420"/>
    </cofactor>
    <text evidence="1">Binds 1 Mg(2+) ion per subunit.</text>
</comment>
<comment type="pathway">
    <text evidence="1">Carbohydrate metabolism; tricarboxylic acid cycle; succinate from succinyl-CoA (ligase route): step 1/1.</text>
</comment>
<comment type="subunit">
    <text evidence="1">Heterotetramer of two alpha and two beta subunits.</text>
</comment>
<comment type="similarity">
    <text evidence="1">Belongs to the succinate/malate CoA ligase beta subunit family.</text>
</comment>
<evidence type="ECO:0000255" key="1">
    <source>
        <dbReference type="HAMAP-Rule" id="MF_00558"/>
    </source>
</evidence>
<keyword id="KW-0067">ATP-binding</keyword>
<keyword id="KW-0436">Ligase</keyword>
<keyword id="KW-0460">Magnesium</keyword>
<keyword id="KW-0479">Metal-binding</keyword>
<keyword id="KW-0547">Nucleotide-binding</keyword>
<keyword id="KW-0816">Tricarboxylic acid cycle</keyword>
<dbReference type="EC" id="6.2.1.5" evidence="1"/>
<dbReference type="EMBL" id="CP000628">
    <property type="protein sequence ID" value="ACM28065.1"/>
    <property type="molecule type" value="Genomic_DNA"/>
</dbReference>
<dbReference type="RefSeq" id="WP_012652669.1">
    <property type="nucleotide sequence ID" value="NC_011985.1"/>
</dbReference>
<dbReference type="SMR" id="B9JCF4"/>
<dbReference type="STRING" id="311403.Arad_4336"/>
<dbReference type="KEGG" id="ara:Arad_4336"/>
<dbReference type="eggNOG" id="COG0045">
    <property type="taxonomic scope" value="Bacteria"/>
</dbReference>
<dbReference type="HOGENOM" id="CLU_037430_0_2_5"/>
<dbReference type="UniPathway" id="UPA00223">
    <property type="reaction ID" value="UER00999"/>
</dbReference>
<dbReference type="Proteomes" id="UP000001600">
    <property type="component" value="Chromosome 1"/>
</dbReference>
<dbReference type="GO" id="GO:0005829">
    <property type="term" value="C:cytosol"/>
    <property type="evidence" value="ECO:0007669"/>
    <property type="project" value="TreeGrafter"/>
</dbReference>
<dbReference type="GO" id="GO:0042709">
    <property type="term" value="C:succinate-CoA ligase complex"/>
    <property type="evidence" value="ECO:0007669"/>
    <property type="project" value="TreeGrafter"/>
</dbReference>
<dbReference type="GO" id="GO:0005524">
    <property type="term" value="F:ATP binding"/>
    <property type="evidence" value="ECO:0007669"/>
    <property type="project" value="UniProtKB-UniRule"/>
</dbReference>
<dbReference type="GO" id="GO:0000287">
    <property type="term" value="F:magnesium ion binding"/>
    <property type="evidence" value="ECO:0007669"/>
    <property type="project" value="UniProtKB-UniRule"/>
</dbReference>
<dbReference type="GO" id="GO:0004775">
    <property type="term" value="F:succinate-CoA ligase (ADP-forming) activity"/>
    <property type="evidence" value="ECO:0007669"/>
    <property type="project" value="UniProtKB-UniRule"/>
</dbReference>
<dbReference type="GO" id="GO:0004776">
    <property type="term" value="F:succinate-CoA ligase (GDP-forming) activity"/>
    <property type="evidence" value="ECO:0007669"/>
    <property type="project" value="RHEA"/>
</dbReference>
<dbReference type="GO" id="GO:0006104">
    <property type="term" value="P:succinyl-CoA metabolic process"/>
    <property type="evidence" value="ECO:0007669"/>
    <property type="project" value="TreeGrafter"/>
</dbReference>
<dbReference type="GO" id="GO:0006099">
    <property type="term" value="P:tricarboxylic acid cycle"/>
    <property type="evidence" value="ECO:0007669"/>
    <property type="project" value="UniProtKB-UniRule"/>
</dbReference>
<dbReference type="FunFam" id="3.30.1490.20:FF:000002">
    <property type="entry name" value="Succinate--CoA ligase [ADP-forming] subunit beta"/>
    <property type="match status" value="1"/>
</dbReference>
<dbReference type="FunFam" id="3.30.470.20:FF:000002">
    <property type="entry name" value="Succinate--CoA ligase [ADP-forming] subunit beta"/>
    <property type="match status" value="1"/>
</dbReference>
<dbReference type="FunFam" id="3.40.50.261:FF:000001">
    <property type="entry name" value="Succinate--CoA ligase [ADP-forming] subunit beta"/>
    <property type="match status" value="1"/>
</dbReference>
<dbReference type="Gene3D" id="3.30.1490.20">
    <property type="entry name" value="ATP-grasp fold, A domain"/>
    <property type="match status" value="1"/>
</dbReference>
<dbReference type="Gene3D" id="3.30.470.20">
    <property type="entry name" value="ATP-grasp fold, B domain"/>
    <property type="match status" value="1"/>
</dbReference>
<dbReference type="Gene3D" id="3.40.50.261">
    <property type="entry name" value="Succinyl-CoA synthetase domains"/>
    <property type="match status" value="1"/>
</dbReference>
<dbReference type="HAMAP" id="MF_00558">
    <property type="entry name" value="Succ_CoA_beta"/>
    <property type="match status" value="1"/>
</dbReference>
<dbReference type="InterPro" id="IPR011761">
    <property type="entry name" value="ATP-grasp"/>
</dbReference>
<dbReference type="InterPro" id="IPR013650">
    <property type="entry name" value="ATP-grasp_succ-CoA_synth-type"/>
</dbReference>
<dbReference type="InterPro" id="IPR013815">
    <property type="entry name" value="ATP_grasp_subdomain_1"/>
</dbReference>
<dbReference type="InterPro" id="IPR017866">
    <property type="entry name" value="Succ-CoA_synthase_bsu_CS"/>
</dbReference>
<dbReference type="InterPro" id="IPR005811">
    <property type="entry name" value="SUCC_ACL_C"/>
</dbReference>
<dbReference type="InterPro" id="IPR005809">
    <property type="entry name" value="Succ_CoA_ligase-like_bsu"/>
</dbReference>
<dbReference type="InterPro" id="IPR016102">
    <property type="entry name" value="Succinyl-CoA_synth-like"/>
</dbReference>
<dbReference type="NCBIfam" id="NF001913">
    <property type="entry name" value="PRK00696.1"/>
    <property type="match status" value="1"/>
</dbReference>
<dbReference type="NCBIfam" id="TIGR01016">
    <property type="entry name" value="sucCoAbeta"/>
    <property type="match status" value="1"/>
</dbReference>
<dbReference type="PANTHER" id="PTHR11815:SF10">
    <property type="entry name" value="SUCCINATE--COA LIGASE [GDP-FORMING] SUBUNIT BETA, MITOCHONDRIAL"/>
    <property type="match status" value="1"/>
</dbReference>
<dbReference type="PANTHER" id="PTHR11815">
    <property type="entry name" value="SUCCINYL-COA SYNTHETASE BETA CHAIN"/>
    <property type="match status" value="1"/>
</dbReference>
<dbReference type="Pfam" id="PF08442">
    <property type="entry name" value="ATP-grasp_2"/>
    <property type="match status" value="1"/>
</dbReference>
<dbReference type="Pfam" id="PF00549">
    <property type="entry name" value="Ligase_CoA"/>
    <property type="match status" value="1"/>
</dbReference>
<dbReference type="PIRSF" id="PIRSF001554">
    <property type="entry name" value="SucCS_beta"/>
    <property type="match status" value="1"/>
</dbReference>
<dbReference type="SUPFAM" id="SSF56059">
    <property type="entry name" value="Glutathione synthetase ATP-binding domain-like"/>
    <property type="match status" value="1"/>
</dbReference>
<dbReference type="SUPFAM" id="SSF52210">
    <property type="entry name" value="Succinyl-CoA synthetase domains"/>
    <property type="match status" value="1"/>
</dbReference>
<dbReference type="PROSITE" id="PS50975">
    <property type="entry name" value="ATP_GRASP"/>
    <property type="match status" value="1"/>
</dbReference>
<dbReference type="PROSITE" id="PS01217">
    <property type="entry name" value="SUCCINYL_COA_LIG_3"/>
    <property type="match status" value="1"/>
</dbReference>
<accession>B9JCF4</accession>
<reference key="1">
    <citation type="journal article" date="2009" name="J. Bacteriol.">
        <title>Genome sequences of three Agrobacterium biovars help elucidate the evolution of multichromosome genomes in bacteria.</title>
        <authorList>
            <person name="Slater S.C."/>
            <person name="Goldman B.S."/>
            <person name="Goodner B."/>
            <person name="Setubal J.C."/>
            <person name="Farrand S.K."/>
            <person name="Nester E.W."/>
            <person name="Burr T.J."/>
            <person name="Banta L."/>
            <person name="Dickerman A.W."/>
            <person name="Paulsen I."/>
            <person name="Otten L."/>
            <person name="Suen G."/>
            <person name="Welch R."/>
            <person name="Almeida N.F."/>
            <person name="Arnold F."/>
            <person name="Burton O.T."/>
            <person name="Du Z."/>
            <person name="Ewing A."/>
            <person name="Godsy E."/>
            <person name="Heisel S."/>
            <person name="Houmiel K.L."/>
            <person name="Jhaveri J."/>
            <person name="Lu J."/>
            <person name="Miller N.M."/>
            <person name="Norton S."/>
            <person name="Chen Q."/>
            <person name="Phoolcharoen W."/>
            <person name="Ohlin V."/>
            <person name="Ondrusek D."/>
            <person name="Pride N."/>
            <person name="Stricklin S.L."/>
            <person name="Sun J."/>
            <person name="Wheeler C."/>
            <person name="Wilson L."/>
            <person name="Zhu H."/>
            <person name="Wood D.W."/>
        </authorList>
    </citation>
    <scope>NUCLEOTIDE SEQUENCE [LARGE SCALE GENOMIC DNA]</scope>
    <source>
        <strain>K84 / ATCC BAA-868</strain>
    </source>
</reference>
<protein>
    <recommendedName>
        <fullName evidence="1">Succinate--CoA ligase [ADP-forming] subunit beta</fullName>
        <ecNumber evidence="1">6.2.1.5</ecNumber>
    </recommendedName>
    <alternativeName>
        <fullName evidence="1">Succinyl-CoA synthetase subunit beta</fullName>
        <shortName evidence="1">SCS-beta</shortName>
    </alternativeName>
</protein>
<gene>
    <name evidence="1" type="primary">sucC</name>
    <name type="ordered locus">Arad_4336</name>
</gene>
<proteinExistence type="inferred from homology"/>
<feature type="chain" id="PRO_1000197690" description="Succinate--CoA ligase [ADP-forming] subunit beta">
    <location>
        <begin position="1"/>
        <end position="397"/>
    </location>
</feature>
<feature type="domain" description="ATP-grasp" evidence="1">
    <location>
        <begin position="9"/>
        <end position="254"/>
    </location>
</feature>
<feature type="binding site" evidence="1">
    <location>
        <position position="46"/>
    </location>
    <ligand>
        <name>ATP</name>
        <dbReference type="ChEBI" id="CHEBI:30616"/>
    </ligand>
</feature>
<feature type="binding site" evidence="1">
    <location>
        <begin position="53"/>
        <end position="55"/>
    </location>
    <ligand>
        <name>ATP</name>
        <dbReference type="ChEBI" id="CHEBI:30616"/>
    </ligand>
</feature>
<feature type="binding site" evidence="1">
    <location>
        <position position="109"/>
    </location>
    <ligand>
        <name>ATP</name>
        <dbReference type="ChEBI" id="CHEBI:30616"/>
    </ligand>
</feature>
<feature type="binding site" evidence="1">
    <location>
        <position position="112"/>
    </location>
    <ligand>
        <name>ATP</name>
        <dbReference type="ChEBI" id="CHEBI:30616"/>
    </ligand>
</feature>
<feature type="binding site" evidence="1">
    <location>
        <position position="117"/>
    </location>
    <ligand>
        <name>ATP</name>
        <dbReference type="ChEBI" id="CHEBI:30616"/>
    </ligand>
</feature>
<feature type="binding site" evidence="1">
    <location>
        <position position="209"/>
    </location>
    <ligand>
        <name>Mg(2+)</name>
        <dbReference type="ChEBI" id="CHEBI:18420"/>
    </ligand>
</feature>
<feature type="binding site" evidence="1">
    <location>
        <position position="223"/>
    </location>
    <ligand>
        <name>Mg(2+)</name>
        <dbReference type="ChEBI" id="CHEBI:18420"/>
    </ligand>
</feature>
<feature type="binding site" evidence="1">
    <location>
        <position position="274"/>
    </location>
    <ligand>
        <name>substrate</name>
        <note>ligand shared with subunit alpha</note>
    </ligand>
</feature>
<feature type="binding site" evidence="1">
    <location>
        <begin position="331"/>
        <end position="333"/>
    </location>
    <ligand>
        <name>substrate</name>
        <note>ligand shared with subunit alpha</note>
    </ligand>
</feature>